<accession>Q56XS8</accession>
<accession>Q9LMH7</accession>
<gene>
    <name type="ordered locus">At1g13780</name>
    <name type="ORF">F16A14.1</name>
</gene>
<protein>
    <recommendedName>
        <fullName>F-box/FBD/LRR-repeat protein At1g13780</fullName>
    </recommendedName>
</protein>
<dbReference type="EMBL" id="AC068197">
    <property type="protein sequence ID" value="AAF79391.1"/>
    <property type="status" value="ALT_SEQ"/>
    <property type="molecule type" value="Genomic_DNA"/>
</dbReference>
<dbReference type="EMBL" id="CP002684">
    <property type="protein sequence ID" value="AEE29068.1"/>
    <property type="molecule type" value="Genomic_DNA"/>
</dbReference>
<dbReference type="EMBL" id="BT012566">
    <property type="protein sequence ID" value="AAS99710.1"/>
    <property type="molecule type" value="mRNA"/>
</dbReference>
<dbReference type="EMBL" id="AK221595">
    <property type="protein sequence ID" value="BAD95126.1"/>
    <property type="molecule type" value="mRNA"/>
</dbReference>
<dbReference type="RefSeq" id="NP_172833.2">
    <property type="nucleotide sequence ID" value="NM_101246.6"/>
</dbReference>
<dbReference type="FunCoup" id="Q56XS8">
    <property type="interactions" value="58"/>
</dbReference>
<dbReference type="PaxDb" id="3702-AT1G13780.1"/>
<dbReference type="ProteomicsDB" id="230410"/>
<dbReference type="EnsemblPlants" id="AT1G13780.1">
    <property type="protein sequence ID" value="AT1G13780.1"/>
    <property type="gene ID" value="AT1G13780"/>
</dbReference>
<dbReference type="GeneID" id="837938"/>
<dbReference type="Gramene" id="AT1G13780.1">
    <property type="protein sequence ID" value="AT1G13780.1"/>
    <property type="gene ID" value="AT1G13780"/>
</dbReference>
<dbReference type="KEGG" id="ath:AT1G13780"/>
<dbReference type="Araport" id="AT1G13780"/>
<dbReference type="TAIR" id="AT1G13780"/>
<dbReference type="HOGENOM" id="CLU_010721_1_3_1"/>
<dbReference type="InParanoid" id="Q56XS8"/>
<dbReference type="OMA" id="SARHMII"/>
<dbReference type="PhylomeDB" id="Q56XS8"/>
<dbReference type="PRO" id="PR:Q56XS8"/>
<dbReference type="Proteomes" id="UP000006548">
    <property type="component" value="Chromosome 1"/>
</dbReference>
<dbReference type="ExpressionAtlas" id="Q56XS8">
    <property type="expression patterns" value="baseline and differential"/>
</dbReference>
<dbReference type="CDD" id="cd22160">
    <property type="entry name" value="F-box_AtFBL13-like"/>
    <property type="match status" value="1"/>
</dbReference>
<dbReference type="Gene3D" id="3.80.10.10">
    <property type="entry name" value="Ribonuclease Inhibitor"/>
    <property type="match status" value="1"/>
</dbReference>
<dbReference type="InterPro" id="IPR036047">
    <property type="entry name" value="F-box-like_dom_sf"/>
</dbReference>
<dbReference type="InterPro" id="IPR053781">
    <property type="entry name" value="F-box_AtFBL13-like"/>
</dbReference>
<dbReference type="InterPro" id="IPR001810">
    <property type="entry name" value="F-box_dom"/>
</dbReference>
<dbReference type="InterPro" id="IPR006566">
    <property type="entry name" value="FBD"/>
</dbReference>
<dbReference type="InterPro" id="IPR050232">
    <property type="entry name" value="FBL13/AtMIF1-like"/>
</dbReference>
<dbReference type="InterPro" id="IPR032675">
    <property type="entry name" value="LRR_dom_sf"/>
</dbReference>
<dbReference type="InterPro" id="IPR055411">
    <property type="entry name" value="LRR_FXL15/At3g58940/PEG3-like"/>
</dbReference>
<dbReference type="PANTHER" id="PTHR31900">
    <property type="entry name" value="F-BOX/RNI SUPERFAMILY PROTEIN-RELATED"/>
    <property type="match status" value="1"/>
</dbReference>
<dbReference type="PANTHER" id="PTHR31900:SF33">
    <property type="entry name" value="PROTEIN WITH RNI-LIKE_FBD-LIKE DOMAIN"/>
    <property type="match status" value="1"/>
</dbReference>
<dbReference type="Pfam" id="PF00646">
    <property type="entry name" value="F-box"/>
    <property type="match status" value="1"/>
</dbReference>
<dbReference type="Pfam" id="PF08387">
    <property type="entry name" value="FBD"/>
    <property type="match status" value="1"/>
</dbReference>
<dbReference type="Pfam" id="PF24758">
    <property type="entry name" value="LRR_At5g56370"/>
    <property type="match status" value="1"/>
</dbReference>
<dbReference type="SMART" id="SM00579">
    <property type="entry name" value="FBD"/>
    <property type="match status" value="1"/>
</dbReference>
<dbReference type="SMART" id="SM00256">
    <property type="entry name" value="FBOX"/>
    <property type="match status" value="1"/>
</dbReference>
<dbReference type="SUPFAM" id="SSF81383">
    <property type="entry name" value="F-box domain"/>
    <property type="match status" value="1"/>
</dbReference>
<dbReference type="SUPFAM" id="SSF52047">
    <property type="entry name" value="RNI-like"/>
    <property type="match status" value="1"/>
</dbReference>
<sequence length="456" mass="52996">MESTVMPGFDRISELPESLISQILLHLPTKASVKTSVLSTRWKNLWLNVPGLDLNCRDFPFQNNNEKLLIDFIDRFLQFNNESRLQKFKVDYSRDKIIKFSDRIGDAISRGIRVLDVESNTYYRDADDCIDYPCIEFMPLNLYSCKTLVSLKLSYSGLEDPGFVYLPCLKFMHLREVRWDSSGTMNLEKLVSGCPVLEELIYLHDDKLVVTRVRSRSLKRFSIPFRHKLSLFRRVTQTFEIDAPGLEYMSLKADHFDRIVVKNLTSLFMIDLDIKFIVGFGWMFDPEDLPKRNEIRDFLTGISSVRHMVISHNTVKALDLYSKVGLIPKFNNLSRVEAAFPSSLLQFLPAFLESFPNLKHLILETECPVEVMEKFELVNVPRCFVSTLEHVEIKGLFDWGEQDMKIASYFLENSAVLKKLILSFMGCPQHYSESDIYEELNKLTKRSPRCQIIIRC</sequence>
<evidence type="ECO:0000305" key="1"/>
<feature type="chain" id="PRO_0000283095" description="F-box/FBD/LRR-repeat protein At1g13780">
    <location>
        <begin position="1"/>
        <end position="456"/>
    </location>
</feature>
<feature type="domain" description="F-box">
    <location>
        <begin position="9"/>
        <end position="55"/>
    </location>
</feature>
<feature type="repeat" description="LRR 1">
    <location>
        <begin position="197"/>
        <end position="220"/>
    </location>
</feature>
<feature type="repeat" description="LRR 2">
    <location>
        <begin position="243"/>
        <end position="266"/>
    </location>
</feature>
<feature type="repeat" description="LRR 3">
    <location>
        <begin position="302"/>
        <end position="325"/>
    </location>
</feature>
<feature type="repeat" description="LRR 4">
    <location>
        <begin position="355"/>
        <end position="379"/>
    </location>
</feature>
<feature type="domain" description="FBD">
    <location>
        <begin position="372"/>
        <end position="424"/>
    </location>
</feature>
<comment type="sequence caution" evidence="1">
    <conflict type="erroneous gene model prediction">
        <sequence resource="EMBL-CDS" id="AAF79391"/>
    </conflict>
</comment>
<name>FDL2_ARATH</name>
<proteinExistence type="evidence at transcript level"/>
<organism>
    <name type="scientific">Arabidopsis thaliana</name>
    <name type="common">Mouse-ear cress</name>
    <dbReference type="NCBI Taxonomy" id="3702"/>
    <lineage>
        <taxon>Eukaryota</taxon>
        <taxon>Viridiplantae</taxon>
        <taxon>Streptophyta</taxon>
        <taxon>Embryophyta</taxon>
        <taxon>Tracheophyta</taxon>
        <taxon>Spermatophyta</taxon>
        <taxon>Magnoliopsida</taxon>
        <taxon>eudicotyledons</taxon>
        <taxon>Gunneridae</taxon>
        <taxon>Pentapetalae</taxon>
        <taxon>rosids</taxon>
        <taxon>malvids</taxon>
        <taxon>Brassicales</taxon>
        <taxon>Brassicaceae</taxon>
        <taxon>Camelineae</taxon>
        <taxon>Arabidopsis</taxon>
    </lineage>
</organism>
<reference key="1">
    <citation type="journal article" date="2000" name="Nature">
        <title>Sequence and analysis of chromosome 1 of the plant Arabidopsis thaliana.</title>
        <authorList>
            <person name="Theologis A."/>
            <person name="Ecker J.R."/>
            <person name="Palm C.J."/>
            <person name="Federspiel N.A."/>
            <person name="Kaul S."/>
            <person name="White O."/>
            <person name="Alonso J."/>
            <person name="Altafi H."/>
            <person name="Araujo R."/>
            <person name="Bowman C.L."/>
            <person name="Brooks S.Y."/>
            <person name="Buehler E."/>
            <person name="Chan A."/>
            <person name="Chao Q."/>
            <person name="Chen H."/>
            <person name="Cheuk R.F."/>
            <person name="Chin C.W."/>
            <person name="Chung M.K."/>
            <person name="Conn L."/>
            <person name="Conway A.B."/>
            <person name="Conway A.R."/>
            <person name="Creasy T.H."/>
            <person name="Dewar K."/>
            <person name="Dunn P."/>
            <person name="Etgu P."/>
            <person name="Feldblyum T.V."/>
            <person name="Feng J.-D."/>
            <person name="Fong B."/>
            <person name="Fujii C.Y."/>
            <person name="Gill J.E."/>
            <person name="Goldsmith A.D."/>
            <person name="Haas B."/>
            <person name="Hansen N.F."/>
            <person name="Hughes B."/>
            <person name="Huizar L."/>
            <person name="Hunter J.L."/>
            <person name="Jenkins J."/>
            <person name="Johnson-Hopson C."/>
            <person name="Khan S."/>
            <person name="Khaykin E."/>
            <person name="Kim C.J."/>
            <person name="Koo H.L."/>
            <person name="Kremenetskaia I."/>
            <person name="Kurtz D.B."/>
            <person name="Kwan A."/>
            <person name="Lam B."/>
            <person name="Langin-Hooper S."/>
            <person name="Lee A."/>
            <person name="Lee J.M."/>
            <person name="Lenz C.A."/>
            <person name="Li J.H."/>
            <person name="Li Y.-P."/>
            <person name="Lin X."/>
            <person name="Liu S.X."/>
            <person name="Liu Z.A."/>
            <person name="Luros J.S."/>
            <person name="Maiti R."/>
            <person name="Marziali A."/>
            <person name="Militscher J."/>
            <person name="Miranda M."/>
            <person name="Nguyen M."/>
            <person name="Nierman W.C."/>
            <person name="Osborne B.I."/>
            <person name="Pai G."/>
            <person name="Peterson J."/>
            <person name="Pham P.K."/>
            <person name="Rizzo M."/>
            <person name="Rooney T."/>
            <person name="Rowley D."/>
            <person name="Sakano H."/>
            <person name="Salzberg S.L."/>
            <person name="Schwartz J.R."/>
            <person name="Shinn P."/>
            <person name="Southwick A.M."/>
            <person name="Sun H."/>
            <person name="Tallon L.J."/>
            <person name="Tambunga G."/>
            <person name="Toriumi M.J."/>
            <person name="Town C.D."/>
            <person name="Utterback T."/>
            <person name="Van Aken S."/>
            <person name="Vaysberg M."/>
            <person name="Vysotskaia V.S."/>
            <person name="Walker M."/>
            <person name="Wu D."/>
            <person name="Yu G."/>
            <person name="Fraser C.M."/>
            <person name="Venter J.C."/>
            <person name="Davis R.W."/>
        </authorList>
    </citation>
    <scope>NUCLEOTIDE SEQUENCE [LARGE SCALE GENOMIC DNA]</scope>
    <source>
        <strain>cv. Columbia</strain>
    </source>
</reference>
<reference key="2">
    <citation type="journal article" date="2017" name="Plant J.">
        <title>Araport11: a complete reannotation of the Arabidopsis thaliana reference genome.</title>
        <authorList>
            <person name="Cheng C.Y."/>
            <person name="Krishnakumar V."/>
            <person name="Chan A.P."/>
            <person name="Thibaud-Nissen F."/>
            <person name="Schobel S."/>
            <person name="Town C.D."/>
        </authorList>
    </citation>
    <scope>GENOME REANNOTATION</scope>
    <source>
        <strain>cv. Columbia</strain>
    </source>
</reference>
<reference key="3">
    <citation type="submission" date="2004-04" db="EMBL/GenBank/DDBJ databases">
        <title>Arabidopsis ORF clones.</title>
        <authorList>
            <person name="Shinn P."/>
            <person name="Chen H."/>
            <person name="Cheuk R.F."/>
            <person name="Kim C.J."/>
            <person name="Carninci P."/>
            <person name="Hayashizaki Y."/>
            <person name="Ishida J."/>
            <person name="Kamiya A."/>
            <person name="Kawai J."/>
            <person name="Narusaka M."/>
            <person name="Sakurai T."/>
            <person name="Satou M."/>
            <person name="Seki M."/>
            <person name="Shinozaki K."/>
            <person name="Ecker J.R."/>
        </authorList>
    </citation>
    <scope>NUCLEOTIDE SEQUENCE [LARGE SCALE MRNA] OF 6-456</scope>
    <source>
        <strain>cv. Columbia</strain>
    </source>
</reference>
<reference key="4">
    <citation type="submission" date="2005-03" db="EMBL/GenBank/DDBJ databases">
        <title>Large-scale analysis of RIKEN Arabidopsis full-length (RAFL) cDNAs.</title>
        <authorList>
            <person name="Totoki Y."/>
            <person name="Seki M."/>
            <person name="Ishida J."/>
            <person name="Nakajima M."/>
            <person name="Enju A."/>
            <person name="Kamiya A."/>
            <person name="Narusaka M."/>
            <person name="Shin-i T."/>
            <person name="Nakagawa M."/>
            <person name="Sakamoto N."/>
            <person name="Oishi K."/>
            <person name="Kohara Y."/>
            <person name="Kobayashi M."/>
            <person name="Toyoda A."/>
            <person name="Sakaki Y."/>
            <person name="Sakurai T."/>
            <person name="Iida K."/>
            <person name="Akiyama K."/>
            <person name="Satou M."/>
            <person name="Toyoda T."/>
            <person name="Konagaya A."/>
            <person name="Carninci P."/>
            <person name="Kawai J."/>
            <person name="Hayashizaki Y."/>
            <person name="Shinozaki K."/>
        </authorList>
    </citation>
    <scope>NUCLEOTIDE SEQUENCE [LARGE SCALE MRNA]</scope>
    <source>
        <strain>cv. Columbia</strain>
    </source>
</reference>
<keyword id="KW-0433">Leucine-rich repeat</keyword>
<keyword id="KW-1185">Reference proteome</keyword>
<keyword id="KW-0677">Repeat</keyword>